<comment type="function">
    <text evidence="1 2">Prenyltransferase that catalyzes the transfer of the geranylgeranyl moiety of geranylgeranyl diphosphate (GGPP) to the C3 hydroxyl of sn-glycerol-1-phosphate (G1P). This reaction is the first ether-bond-formation step in the biosynthesis of archaeal membrane lipids.</text>
</comment>
<comment type="catalytic activity">
    <reaction evidence="1 2">
        <text>sn-glycerol 1-phosphate + (2E,6E,10E)-geranylgeranyl diphosphate = sn-3-O-(geranylgeranyl)glycerol 1-phosphate + diphosphate</text>
        <dbReference type="Rhea" id="RHEA:23404"/>
        <dbReference type="ChEBI" id="CHEBI:33019"/>
        <dbReference type="ChEBI" id="CHEBI:57677"/>
        <dbReference type="ChEBI" id="CHEBI:57685"/>
        <dbReference type="ChEBI" id="CHEBI:58756"/>
        <dbReference type="EC" id="2.5.1.41"/>
    </reaction>
</comment>
<comment type="cofactor">
    <cofactor evidence="1">
        <name>Mg(2+)</name>
        <dbReference type="ChEBI" id="CHEBI:18420"/>
    </cofactor>
</comment>
<comment type="pathway">
    <text evidence="1">Membrane lipid metabolism; glycerophospholipid metabolism.</text>
</comment>
<comment type="subcellular location">
    <subcellularLocation>
        <location evidence="1">Cytoplasm</location>
    </subcellularLocation>
</comment>
<comment type="similarity">
    <text evidence="1">Belongs to the GGGP/HepGP synthase family. Group II subfamily.</text>
</comment>
<sequence length="255" mass="27921">MRILKKKMKLKGKVKKYLIDKLNDNEKLHFSLIDPFKINSSDELKYITKNLYNAGTDAFLIGGTLGVSKDKLDFVISLLDDYEIPKIIFPSNINLLSEKADALLFMSLLNSDDIYYIIGAQIVAAPIIKMLQMEVIPTAYVIVGHGGTAAHIGKARVIPYDNFELATAYTLAAEYLGMSFVYLEAGSGAPEPIRPEMISFIKNASSIPLIVGGGIRSVEVALKLVEAGADIIVTGNIIESDVNKAIKIIRGIKNK</sequence>
<name>GGGPS_SACS2</name>
<gene>
    <name type="ordered locus">SSO0259</name>
</gene>
<reference key="1">
    <citation type="journal article" date="2001" name="Proc. Natl. Acad. Sci. U.S.A.">
        <title>The complete genome of the crenarchaeon Sulfolobus solfataricus P2.</title>
        <authorList>
            <person name="She Q."/>
            <person name="Singh R.K."/>
            <person name="Confalonieri F."/>
            <person name="Zivanovic Y."/>
            <person name="Allard G."/>
            <person name="Awayez M.J."/>
            <person name="Chan-Weiher C.C.-Y."/>
            <person name="Clausen I.G."/>
            <person name="Curtis B.A."/>
            <person name="De Moors A."/>
            <person name="Erauso G."/>
            <person name="Fletcher C."/>
            <person name="Gordon P.M.K."/>
            <person name="Heikamp-de Jong I."/>
            <person name="Jeffries A.C."/>
            <person name="Kozera C.J."/>
            <person name="Medina N."/>
            <person name="Peng X."/>
            <person name="Thi-Ngoc H.P."/>
            <person name="Redder P."/>
            <person name="Schenk M.E."/>
            <person name="Theriault C."/>
            <person name="Tolstrup N."/>
            <person name="Charlebois R.L."/>
            <person name="Doolittle W.F."/>
            <person name="Duguet M."/>
            <person name="Gaasterland T."/>
            <person name="Garrett R.A."/>
            <person name="Ragan M.A."/>
            <person name="Sensen C.W."/>
            <person name="Van der Oost J."/>
        </authorList>
    </citation>
    <scope>NUCLEOTIDE SEQUENCE [LARGE SCALE GENOMIC DNA]</scope>
    <source>
        <strain>ATCC 35092 / DSM 1617 / JCM 11322 / P2</strain>
    </source>
</reference>
<reference key="2">
    <citation type="journal article" date="2004" name="J. Biol. Chem.">
        <title>(S)-2,3-di-O-geranylgeranylglyceryl phosphate synthase from the thermoacidophilic archaeon Sulfolobus solfataricus. Molecular cloning and characterization of a membrane-intrinsic prenyltransferase involved in the biosynthesis of archaeal ether-linked membrane lipids.</title>
        <authorList>
            <person name="Hemmi H."/>
            <person name="Shibuya K."/>
            <person name="Takahashi Y."/>
            <person name="Nakayama T."/>
            <person name="Nishino T."/>
        </authorList>
    </citation>
    <scope>FUNCTION</scope>
    <scope>CATALYTIC ACTIVITY</scope>
    <source>
        <strain>ATCC 35092 / DSM 1617 / JCM 11322 / P2</strain>
    </source>
</reference>
<accession>Q980N1</accession>
<protein>
    <recommendedName>
        <fullName evidence="1">Geranylgeranylglyceryl phosphate synthase</fullName>
        <shortName evidence="1">GGGP synthase</shortName>
        <shortName evidence="1">GGGPS</shortName>
        <ecNumber evidence="1 2">2.5.1.41</ecNumber>
    </recommendedName>
    <alternativeName>
        <fullName evidence="1">(S)-3-O-geranylgeranylglyceryl phosphate synthase</fullName>
    </alternativeName>
    <alternativeName>
        <fullName evidence="1">Phosphoglycerol geranylgeranyltransferase</fullName>
    </alternativeName>
</protein>
<feature type="chain" id="PRO_0000138744" description="Geranylgeranylglyceryl phosphate synthase">
    <location>
        <begin position="1"/>
        <end position="255"/>
    </location>
</feature>
<feature type="binding site" evidence="1">
    <location>
        <position position="34"/>
    </location>
    <ligand>
        <name>Mg(2+)</name>
        <dbReference type="ChEBI" id="CHEBI:18420"/>
    </ligand>
</feature>
<feature type="binding site" evidence="1">
    <location>
        <position position="64"/>
    </location>
    <ligand>
        <name>Mg(2+)</name>
        <dbReference type="ChEBI" id="CHEBI:18420"/>
    </ligand>
</feature>
<feature type="binding site" evidence="1">
    <location>
        <begin position="182"/>
        <end position="188"/>
    </location>
    <ligand>
        <name>sn-glycerol 1-phosphate</name>
        <dbReference type="ChEBI" id="CHEBI:57685"/>
    </ligand>
</feature>
<feature type="binding site" evidence="1">
    <location>
        <begin position="213"/>
        <end position="214"/>
    </location>
    <ligand>
        <name>sn-glycerol 1-phosphate</name>
        <dbReference type="ChEBI" id="CHEBI:57685"/>
    </ligand>
</feature>
<feature type="binding site" evidence="1">
    <location>
        <begin position="235"/>
        <end position="236"/>
    </location>
    <ligand>
        <name>sn-glycerol 1-phosphate</name>
        <dbReference type="ChEBI" id="CHEBI:57685"/>
    </ligand>
</feature>
<dbReference type="EC" id="2.5.1.41" evidence="1 2"/>
<dbReference type="EMBL" id="AE006641">
    <property type="protein sequence ID" value="AAK40599.1"/>
    <property type="molecule type" value="Genomic_DNA"/>
</dbReference>
<dbReference type="PIR" id="H90167">
    <property type="entry name" value="H90167"/>
</dbReference>
<dbReference type="RefSeq" id="WP_010922925.1">
    <property type="nucleotide sequence ID" value="NC_002754.1"/>
</dbReference>
<dbReference type="SMR" id="Q980N1"/>
<dbReference type="STRING" id="273057.SSO0259"/>
<dbReference type="PaxDb" id="273057-SSO0259"/>
<dbReference type="EnsemblBacteria" id="AAK40599">
    <property type="protein sequence ID" value="AAK40599"/>
    <property type="gene ID" value="SSO0259"/>
</dbReference>
<dbReference type="KEGG" id="sso:SSO0259"/>
<dbReference type="PATRIC" id="fig|273057.12.peg.255"/>
<dbReference type="eggNOG" id="arCOG01085">
    <property type="taxonomic scope" value="Archaea"/>
</dbReference>
<dbReference type="HOGENOM" id="CLU_068610_0_0_2"/>
<dbReference type="InParanoid" id="Q980N1"/>
<dbReference type="PhylomeDB" id="Q980N1"/>
<dbReference type="BRENDA" id="1.1.1.34">
    <property type="organism ID" value="6163"/>
</dbReference>
<dbReference type="UniPathway" id="UPA00940"/>
<dbReference type="Proteomes" id="UP000001974">
    <property type="component" value="Chromosome"/>
</dbReference>
<dbReference type="GO" id="GO:0005737">
    <property type="term" value="C:cytoplasm"/>
    <property type="evidence" value="ECO:0007669"/>
    <property type="project" value="UniProtKB-SubCell"/>
</dbReference>
<dbReference type="GO" id="GO:0000107">
    <property type="term" value="F:imidazoleglycerol-phosphate synthase activity"/>
    <property type="evidence" value="ECO:0000318"/>
    <property type="project" value="GO_Central"/>
</dbReference>
<dbReference type="GO" id="GO:0000287">
    <property type="term" value="F:magnesium ion binding"/>
    <property type="evidence" value="ECO:0007669"/>
    <property type="project" value="UniProtKB-UniRule"/>
</dbReference>
<dbReference type="GO" id="GO:0047294">
    <property type="term" value="F:phosphoglycerol geranylgeranyltransferase activity"/>
    <property type="evidence" value="ECO:0007669"/>
    <property type="project" value="UniProtKB-UniRule"/>
</dbReference>
<dbReference type="GO" id="GO:0046474">
    <property type="term" value="P:glycerophospholipid biosynthetic process"/>
    <property type="evidence" value="ECO:0007669"/>
    <property type="project" value="UniProtKB-UniRule"/>
</dbReference>
<dbReference type="CDD" id="cd02812">
    <property type="entry name" value="PcrB_like"/>
    <property type="match status" value="1"/>
</dbReference>
<dbReference type="FunFam" id="3.20.20.390:FF:000001">
    <property type="entry name" value="Heptaprenylglyceryl phosphate synthase"/>
    <property type="match status" value="1"/>
</dbReference>
<dbReference type="Gene3D" id="3.20.20.390">
    <property type="entry name" value="FMN-linked oxidoreductases"/>
    <property type="match status" value="1"/>
</dbReference>
<dbReference type="HAMAP" id="MF_00112">
    <property type="entry name" value="GGGP_HepGP_synthase"/>
    <property type="match status" value="1"/>
</dbReference>
<dbReference type="InterPro" id="IPR039074">
    <property type="entry name" value="GGGP/HepGP_synthase_I"/>
</dbReference>
<dbReference type="InterPro" id="IPR038597">
    <property type="entry name" value="GGGP/HepGP_synthase_sf"/>
</dbReference>
<dbReference type="InterPro" id="IPR008205">
    <property type="entry name" value="GGGP_HepGP_synthase"/>
</dbReference>
<dbReference type="InterPro" id="IPR010946">
    <property type="entry name" value="GGGP_synth"/>
</dbReference>
<dbReference type="NCBIfam" id="TIGR01769">
    <property type="entry name" value="GGGP"/>
    <property type="match status" value="1"/>
</dbReference>
<dbReference type="NCBIfam" id="TIGR01768">
    <property type="entry name" value="GGGP-family"/>
    <property type="match status" value="1"/>
</dbReference>
<dbReference type="NCBIfam" id="NF003198">
    <property type="entry name" value="PRK04169.1-2"/>
    <property type="match status" value="1"/>
</dbReference>
<dbReference type="NCBIfam" id="NF003202">
    <property type="entry name" value="PRK04169.1-6"/>
    <property type="match status" value="1"/>
</dbReference>
<dbReference type="PANTHER" id="PTHR40029">
    <property type="match status" value="1"/>
</dbReference>
<dbReference type="PANTHER" id="PTHR40029:SF2">
    <property type="entry name" value="HEPTAPRENYLGLYCERYL PHOSPHATE SYNTHASE"/>
    <property type="match status" value="1"/>
</dbReference>
<dbReference type="Pfam" id="PF01884">
    <property type="entry name" value="PcrB"/>
    <property type="match status" value="1"/>
</dbReference>
<dbReference type="SUPFAM" id="SSF51395">
    <property type="entry name" value="FMN-linked oxidoreductases"/>
    <property type="match status" value="1"/>
</dbReference>
<evidence type="ECO:0000255" key="1">
    <source>
        <dbReference type="HAMAP-Rule" id="MF_00112"/>
    </source>
</evidence>
<evidence type="ECO:0000269" key="2">
    <source>
    </source>
</evidence>
<keyword id="KW-0963">Cytoplasm</keyword>
<keyword id="KW-0444">Lipid biosynthesis</keyword>
<keyword id="KW-0443">Lipid metabolism</keyword>
<keyword id="KW-0460">Magnesium</keyword>
<keyword id="KW-0479">Metal-binding</keyword>
<keyword id="KW-0594">Phospholipid biosynthesis</keyword>
<keyword id="KW-1208">Phospholipid metabolism</keyword>
<keyword id="KW-1185">Reference proteome</keyword>
<keyword id="KW-0808">Transferase</keyword>
<organism>
    <name type="scientific">Saccharolobus solfataricus (strain ATCC 35092 / DSM 1617 / JCM 11322 / P2)</name>
    <name type="common">Sulfolobus solfataricus</name>
    <dbReference type="NCBI Taxonomy" id="273057"/>
    <lineage>
        <taxon>Archaea</taxon>
        <taxon>Thermoproteota</taxon>
        <taxon>Thermoprotei</taxon>
        <taxon>Sulfolobales</taxon>
        <taxon>Sulfolobaceae</taxon>
        <taxon>Saccharolobus</taxon>
    </lineage>
</organism>
<proteinExistence type="evidence at protein level"/>